<comment type="function">
    <text evidence="1">Catalyzes the GTP-dependent ribosomal translocation step during translation elongation. During this step, the ribosome changes from the pre-translocational (PRE) to the post-translocational (POST) state as the newly formed A-site-bound peptidyl-tRNA and P-site-bound deacylated tRNA move to the P and E sites, respectively. Catalyzes the coordinated movement of the two tRNA molecules, the mRNA and conformational changes in the ribosome.</text>
</comment>
<comment type="subcellular location">
    <subcellularLocation>
        <location evidence="1">Cytoplasm</location>
    </subcellularLocation>
</comment>
<comment type="similarity">
    <text evidence="1">Belongs to the TRAFAC class translation factor GTPase superfamily. Classic translation factor GTPase family. EF-G/EF-2 subfamily.</text>
</comment>
<keyword id="KW-0963">Cytoplasm</keyword>
<keyword id="KW-0251">Elongation factor</keyword>
<keyword id="KW-0342">GTP-binding</keyword>
<keyword id="KW-0547">Nucleotide-binding</keyword>
<keyword id="KW-0648">Protein biosynthesis</keyword>
<accession>Q1CCT8</accession>
<accession>D1Q2M7</accession>
<dbReference type="EMBL" id="CP000305">
    <property type="protein sequence ID" value="ABG20192.1"/>
    <property type="molecule type" value="Genomic_DNA"/>
</dbReference>
<dbReference type="EMBL" id="ACNQ01000019">
    <property type="protein sequence ID" value="EEO74780.1"/>
    <property type="molecule type" value="Genomic_DNA"/>
</dbReference>
<dbReference type="RefSeq" id="WP_002212325.1">
    <property type="nucleotide sequence ID" value="NZ_ACNQ01000019.1"/>
</dbReference>
<dbReference type="SMR" id="Q1CCT8"/>
<dbReference type="GeneID" id="96663201"/>
<dbReference type="KEGG" id="ypn:YPN_3865"/>
<dbReference type="HOGENOM" id="CLU_002794_4_1_6"/>
<dbReference type="Proteomes" id="UP000008936">
    <property type="component" value="Chromosome"/>
</dbReference>
<dbReference type="GO" id="GO:0005737">
    <property type="term" value="C:cytoplasm"/>
    <property type="evidence" value="ECO:0007669"/>
    <property type="project" value="UniProtKB-SubCell"/>
</dbReference>
<dbReference type="GO" id="GO:0005525">
    <property type="term" value="F:GTP binding"/>
    <property type="evidence" value="ECO:0007669"/>
    <property type="project" value="UniProtKB-UniRule"/>
</dbReference>
<dbReference type="GO" id="GO:0003924">
    <property type="term" value="F:GTPase activity"/>
    <property type="evidence" value="ECO:0007669"/>
    <property type="project" value="InterPro"/>
</dbReference>
<dbReference type="GO" id="GO:0097216">
    <property type="term" value="F:guanosine tetraphosphate binding"/>
    <property type="evidence" value="ECO:0007669"/>
    <property type="project" value="UniProtKB-ARBA"/>
</dbReference>
<dbReference type="GO" id="GO:0003746">
    <property type="term" value="F:translation elongation factor activity"/>
    <property type="evidence" value="ECO:0007669"/>
    <property type="project" value="UniProtKB-UniRule"/>
</dbReference>
<dbReference type="GO" id="GO:0032790">
    <property type="term" value="P:ribosome disassembly"/>
    <property type="evidence" value="ECO:0007669"/>
    <property type="project" value="TreeGrafter"/>
</dbReference>
<dbReference type="CDD" id="cd01886">
    <property type="entry name" value="EF-G"/>
    <property type="match status" value="1"/>
</dbReference>
<dbReference type="CDD" id="cd16262">
    <property type="entry name" value="EFG_III"/>
    <property type="match status" value="1"/>
</dbReference>
<dbReference type="CDD" id="cd01434">
    <property type="entry name" value="EFG_mtEFG1_IV"/>
    <property type="match status" value="1"/>
</dbReference>
<dbReference type="CDD" id="cd03713">
    <property type="entry name" value="EFG_mtEFG_C"/>
    <property type="match status" value="1"/>
</dbReference>
<dbReference type="CDD" id="cd04088">
    <property type="entry name" value="EFG_mtEFG_II"/>
    <property type="match status" value="1"/>
</dbReference>
<dbReference type="FunFam" id="2.40.30.10:FF:000006">
    <property type="entry name" value="Elongation factor G"/>
    <property type="match status" value="1"/>
</dbReference>
<dbReference type="FunFam" id="3.30.230.10:FF:000003">
    <property type="entry name" value="Elongation factor G"/>
    <property type="match status" value="1"/>
</dbReference>
<dbReference type="FunFam" id="3.30.70.240:FF:000001">
    <property type="entry name" value="Elongation factor G"/>
    <property type="match status" value="1"/>
</dbReference>
<dbReference type="FunFam" id="3.30.70.870:FF:000001">
    <property type="entry name" value="Elongation factor G"/>
    <property type="match status" value="1"/>
</dbReference>
<dbReference type="FunFam" id="3.40.50.300:FF:000029">
    <property type="entry name" value="Elongation factor G"/>
    <property type="match status" value="1"/>
</dbReference>
<dbReference type="Gene3D" id="3.30.230.10">
    <property type="match status" value="1"/>
</dbReference>
<dbReference type="Gene3D" id="3.30.70.240">
    <property type="match status" value="1"/>
</dbReference>
<dbReference type="Gene3D" id="3.30.70.870">
    <property type="entry name" value="Elongation Factor G (Translational Gtpase), domain 3"/>
    <property type="match status" value="1"/>
</dbReference>
<dbReference type="Gene3D" id="3.40.50.300">
    <property type="entry name" value="P-loop containing nucleotide triphosphate hydrolases"/>
    <property type="match status" value="1"/>
</dbReference>
<dbReference type="Gene3D" id="2.40.30.10">
    <property type="entry name" value="Translation factors"/>
    <property type="match status" value="1"/>
</dbReference>
<dbReference type="HAMAP" id="MF_00054_B">
    <property type="entry name" value="EF_G_EF_2_B"/>
    <property type="match status" value="1"/>
</dbReference>
<dbReference type="InterPro" id="IPR041095">
    <property type="entry name" value="EFG_II"/>
</dbReference>
<dbReference type="InterPro" id="IPR009022">
    <property type="entry name" value="EFG_III"/>
</dbReference>
<dbReference type="InterPro" id="IPR035647">
    <property type="entry name" value="EFG_III/V"/>
</dbReference>
<dbReference type="InterPro" id="IPR047872">
    <property type="entry name" value="EFG_IV"/>
</dbReference>
<dbReference type="InterPro" id="IPR035649">
    <property type="entry name" value="EFG_V"/>
</dbReference>
<dbReference type="InterPro" id="IPR000640">
    <property type="entry name" value="EFG_V-like"/>
</dbReference>
<dbReference type="InterPro" id="IPR004161">
    <property type="entry name" value="EFTu-like_2"/>
</dbReference>
<dbReference type="InterPro" id="IPR031157">
    <property type="entry name" value="G_TR_CS"/>
</dbReference>
<dbReference type="InterPro" id="IPR027417">
    <property type="entry name" value="P-loop_NTPase"/>
</dbReference>
<dbReference type="InterPro" id="IPR020568">
    <property type="entry name" value="Ribosomal_Su5_D2-typ_SF"/>
</dbReference>
<dbReference type="InterPro" id="IPR014721">
    <property type="entry name" value="Ribsml_uS5_D2-typ_fold_subgr"/>
</dbReference>
<dbReference type="InterPro" id="IPR005225">
    <property type="entry name" value="Small_GTP-bd"/>
</dbReference>
<dbReference type="InterPro" id="IPR000795">
    <property type="entry name" value="T_Tr_GTP-bd_dom"/>
</dbReference>
<dbReference type="InterPro" id="IPR009000">
    <property type="entry name" value="Transl_B-barrel_sf"/>
</dbReference>
<dbReference type="InterPro" id="IPR004540">
    <property type="entry name" value="Transl_elong_EFG/EF2"/>
</dbReference>
<dbReference type="InterPro" id="IPR005517">
    <property type="entry name" value="Transl_elong_EFG/EF2_IV"/>
</dbReference>
<dbReference type="NCBIfam" id="TIGR00484">
    <property type="entry name" value="EF-G"/>
    <property type="match status" value="1"/>
</dbReference>
<dbReference type="NCBIfam" id="NF009381">
    <property type="entry name" value="PRK12740.1-5"/>
    <property type="match status" value="1"/>
</dbReference>
<dbReference type="NCBIfam" id="TIGR00231">
    <property type="entry name" value="small_GTP"/>
    <property type="match status" value="1"/>
</dbReference>
<dbReference type="PANTHER" id="PTHR43261:SF1">
    <property type="entry name" value="RIBOSOME-RELEASING FACTOR 2, MITOCHONDRIAL"/>
    <property type="match status" value="1"/>
</dbReference>
<dbReference type="PANTHER" id="PTHR43261">
    <property type="entry name" value="TRANSLATION ELONGATION FACTOR G-RELATED"/>
    <property type="match status" value="1"/>
</dbReference>
<dbReference type="Pfam" id="PF00679">
    <property type="entry name" value="EFG_C"/>
    <property type="match status" value="1"/>
</dbReference>
<dbReference type="Pfam" id="PF14492">
    <property type="entry name" value="EFG_III"/>
    <property type="match status" value="1"/>
</dbReference>
<dbReference type="Pfam" id="PF03764">
    <property type="entry name" value="EFG_IV"/>
    <property type="match status" value="1"/>
</dbReference>
<dbReference type="Pfam" id="PF00009">
    <property type="entry name" value="GTP_EFTU"/>
    <property type="match status" value="1"/>
</dbReference>
<dbReference type="Pfam" id="PF03144">
    <property type="entry name" value="GTP_EFTU_D2"/>
    <property type="match status" value="1"/>
</dbReference>
<dbReference type="PRINTS" id="PR00315">
    <property type="entry name" value="ELONGATNFCT"/>
</dbReference>
<dbReference type="SMART" id="SM00838">
    <property type="entry name" value="EFG_C"/>
    <property type="match status" value="1"/>
</dbReference>
<dbReference type="SMART" id="SM00889">
    <property type="entry name" value="EFG_IV"/>
    <property type="match status" value="1"/>
</dbReference>
<dbReference type="SUPFAM" id="SSF54980">
    <property type="entry name" value="EF-G C-terminal domain-like"/>
    <property type="match status" value="2"/>
</dbReference>
<dbReference type="SUPFAM" id="SSF52540">
    <property type="entry name" value="P-loop containing nucleoside triphosphate hydrolases"/>
    <property type="match status" value="1"/>
</dbReference>
<dbReference type="SUPFAM" id="SSF54211">
    <property type="entry name" value="Ribosomal protein S5 domain 2-like"/>
    <property type="match status" value="1"/>
</dbReference>
<dbReference type="SUPFAM" id="SSF50447">
    <property type="entry name" value="Translation proteins"/>
    <property type="match status" value="1"/>
</dbReference>
<dbReference type="PROSITE" id="PS00301">
    <property type="entry name" value="G_TR_1"/>
    <property type="match status" value="1"/>
</dbReference>
<dbReference type="PROSITE" id="PS51722">
    <property type="entry name" value="G_TR_2"/>
    <property type="match status" value="1"/>
</dbReference>
<proteinExistence type="inferred from homology"/>
<protein>
    <recommendedName>
        <fullName evidence="1">Elongation factor G</fullName>
        <shortName evidence="1">EF-G</shortName>
    </recommendedName>
</protein>
<sequence>MARKTPIERYRNIGISAHIDAGKTTTTERILFYTGVNHKIGEVHDGAATMDWMEQEQERGITITSAATTCFWSGMAKQFEPHHVNIIDTPGHVDFTIEVERSMRVLDGAVMVYCAVGGVQPQSETVWRQANKYKVPRIAFVNKMDRMGANFLRVVGQLKSRLGANPVPLQLAIGAEEKFTGIIDLVKMKAINWNEADQGVTFEYEEIPADMAELAAEWHQNLVESAAEASDELMDKYLGGEELTEEEIKKALRQRVLKSEIILVTCGSAFKNKGVQAMLDAVIEYLPAPTDVESINGILDDGKDTPAVRHSDDKEPFSALAFKIATDPFVGNLTFFRVYSGIVNSGDTVLNSVKSQRERLGRIVQMHANKREEIKEVHAGDIAAAIGLKDVTTGDTLCDPNNPIILERMEFPEPVISVAVEPKTKADQEKMGMALGRLAKEDPSFRVWTDEESGQTIIAGMGELHLDILVDRMRREFNVEANVGKPQVAYRETIRETVKDVEGKHAKQSGGRGQYGHVVIDMSPLPPGGVGYEFVNEIVGGSIPKEFIPAVDKGIQEQLKSGPLAGYPVVDVKVRLHYGSYHDVDSSELAFKLAGSIAFKEGFKRAKPVLLEPIMKVEVETPEDYMGDVMGDLNRRRGIIEGMEDTATGKTVRVKVPLSEMFGYATDLRSQTQGRASYSMEFLEYAEAPSNVAKAVIEARGK</sequence>
<gene>
    <name evidence="1" type="primary">fusA</name>
    <name type="ordered locus">YPN_3865</name>
    <name type="ORF">YP516_4390</name>
</gene>
<name>EFG_YERPN</name>
<organism>
    <name type="scientific">Yersinia pestis bv. Antiqua (strain Nepal516)</name>
    <dbReference type="NCBI Taxonomy" id="377628"/>
    <lineage>
        <taxon>Bacteria</taxon>
        <taxon>Pseudomonadati</taxon>
        <taxon>Pseudomonadota</taxon>
        <taxon>Gammaproteobacteria</taxon>
        <taxon>Enterobacterales</taxon>
        <taxon>Yersiniaceae</taxon>
        <taxon>Yersinia</taxon>
    </lineage>
</organism>
<evidence type="ECO:0000255" key="1">
    <source>
        <dbReference type="HAMAP-Rule" id="MF_00054"/>
    </source>
</evidence>
<reference key="1">
    <citation type="journal article" date="2006" name="J. Bacteriol.">
        <title>Complete genome sequence of Yersinia pestis strains Antiqua and Nepal516: evidence of gene reduction in an emerging pathogen.</title>
        <authorList>
            <person name="Chain P.S.G."/>
            <person name="Hu P."/>
            <person name="Malfatti S.A."/>
            <person name="Radnedge L."/>
            <person name="Larimer F."/>
            <person name="Vergez L.M."/>
            <person name="Worsham P."/>
            <person name="Chu M.C."/>
            <person name="Andersen G.L."/>
        </authorList>
    </citation>
    <scope>NUCLEOTIDE SEQUENCE [LARGE SCALE GENOMIC DNA]</scope>
    <source>
        <strain>Nepal516</strain>
    </source>
</reference>
<reference key="2">
    <citation type="submission" date="2009-04" db="EMBL/GenBank/DDBJ databases">
        <title>Yersinia pestis Nepal516A whole genome shotgun sequencing project.</title>
        <authorList>
            <person name="Plunkett G. III"/>
            <person name="Anderson B.D."/>
            <person name="Baumler D.J."/>
            <person name="Burland V."/>
            <person name="Cabot E.L."/>
            <person name="Glasner J.D."/>
            <person name="Mau B."/>
            <person name="Neeno-Eckwall E."/>
            <person name="Perna N.T."/>
            <person name="Munk A.C."/>
            <person name="Tapia R."/>
            <person name="Green L.D."/>
            <person name="Rogers Y.C."/>
            <person name="Detter J.C."/>
            <person name="Bruce D.C."/>
            <person name="Brettin T.S."/>
        </authorList>
    </citation>
    <scope>NUCLEOTIDE SEQUENCE [LARGE SCALE GENOMIC DNA]</scope>
    <source>
        <strain>Nepal516</strain>
    </source>
</reference>
<feature type="chain" id="PRO_0000263536" description="Elongation factor G">
    <location>
        <begin position="1"/>
        <end position="702"/>
    </location>
</feature>
<feature type="domain" description="tr-type G">
    <location>
        <begin position="8"/>
        <end position="290"/>
    </location>
</feature>
<feature type="binding site" evidence="1">
    <location>
        <begin position="17"/>
        <end position="24"/>
    </location>
    <ligand>
        <name>GTP</name>
        <dbReference type="ChEBI" id="CHEBI:37565"/>
    </ligand>
</feature>
<feature type="binding site" evidence="1">
    <location>
        <begin position="88"/>
        <end position="92"/>
    </location>
    <ligand>
        <name>GTP</name>
        <dbReference type="ChEBI" id="CHEBI:37565"/>
    </ligand>
</feature>
<feature type="binding site" evidence="1">
    <location>
        <begin position="142"/>
        <end position="145"/>
    </location>
    <ligand>
        <name>GTP</name>
        <dbReference type="ChEBI" id="CHEBI:37565"/>
    </ligand>
</feature>